<protein>
    <recommendedName>
        <fullName>Neutral phospholipase A2 homolog cannitoxin beta chain 1</fullName>
        <shortName>svPLA2 homolog</shortName>
    </recommendedName>
</protein>
<organism>
    <name type="scientific">Oxyuranus scutellatus canni</name>
    <name type="common">Papuan taipan</name>
    <dbReference type="NCBI Taxonomy" id="183720"/>
    <lineage>
        <taxon>Eukaryota</taxon>
        <taxon>Metazoa</taxon>
        <taxon>Chordata</taxon>
        <taxon>Craniata</taxon>
        <taxon>Vertebrata</taxon>
        <taxon>Euteleostomi</taxon>
        <taxon>Lepidosauria</taxon>
        <taxon>Squamata</taxon>
        <taxon>Bifurcata</taxon>
        <taxon>Unidentata</taxon>
        <taxon>Episquamata</taxon>
        <taxon>Toxicofera</taxon>
        <taxon>Serpentes</taxon>
        <taxon>Colubroidea</taxon>
        <taxon>Elapidae</taxon>
        <taxon>Hydrophiinae</taxon>
        <taxon>Oxyuranus</taxon>
    </lineage>
</organism>
<accession>P0DKT8</accession>
<keyword id="KW-0903">Direct protein sequencing</keyword>
<keyword id="KW-1015">Disulfide bond</keyword>
<keyword id="KW-0964">Secreted</keyword>
<reference key="1">
    <citation type="journal article" date="2005" name="J. Pharmacol. Exp. Ther.">
        <title>Isolation and pharmacological characterization of cannitoxin, a presynaptic neurotoxin from the venom of the Papuan Taipan (Oxyuranus scutellatus canni).</title>
        <authorList>
            <person name="Kuruppu S."/>
            <person name="Reeve S."/>
            <person name="Banerjee Y."/>
            <person name="Kini R.M."/>
            <person name="Smith A.I."/>
            <person name="Hodgson W.C."/>
        </authorList>
    </citation>
    <scope>PROTEIN SEQUENCE</scope>
    <scope>FUNCTION</scope>
    <scope>MASS SPECTROMETRY</scope>
    <source>
        <tissue>Venom</tissue>
    </source>
</reference>
<dbReference type="GO" id="GO:0005576">
    <property type="term" value="C:extracellular region"/>
    <property type="evidence" value="ECO:0007669"/>
    <property type="project" value="UniProtKB-SubCell"/>
</dbReference>
<proteinExistence type="evidence at protein level"/>
<feature type="chain" id="PRO_0000420855" description="Neutral phospholipase A2 homolog cannitoxin beta chain 1">
    <location>
        <begin position="1"/>
        <end position="10" status="greater than"/>
    </location>
</feature>
<feature type="non-terminal residue">
    <location>
        <position position="10"/>
    </location>
</feature>
<comment type="function">
    <text evidence="1 2">Heterotrimer: Snake venom phospholipase A2 (PLA2) heterotrimer that acts as a potent presynaptic neurotoxin by blocking synaptic transmission and synaptic vesicle recycling. Enzymatic activity is essential for the neurotoxic effects (PubMed:16135698). May act by binding in a calcium-dependent fashion to neurotonal pentraxin-1 (NPTX1) and neurotonal pentraxin-2 (NPTX2), but not to neuronal pentraxin receptor (NPTXR). Also binds to taipoxin-associated calcium binding protein 49 (RCN2), a protein localized in the lumen of endoplasmic reticulum (By similarity).</text>
</comment>
<comment type="function">
    <text evidence="1">Monomer (beta chain): Snake venom phospholipase A2 homolog that is neither toxic nor enzymatically active. Does not bind calcium (By similarity).</text>
</comment>
<comment type="subunit">
    <text>Heterotrimer of alpha, beta, and gamma chains; non-covalently linked.</text>
</comment>
<comment type="subcellular location">
    <subcellularLocation>
        <location>Secreted</location>
    </subcellularLocation>
</comment>
<comment type="tissue specificity">
    <text>Expressed by the venom gland.</text>
</comment>
<comment type="PTM">
    <text>Contains 7 disulfide bonds.</text>
</comment>
<comment type="mass spectrometry"/>
<comment type="similarity">
    <text evidence="3">Belongs to the phospholipase A2 family. Group I subfamily. D49 sub-subfamily.</text>
</comment>
<evidence type="ECO:0000250" key="1"/>
<evidence type="ECO:0000269" key="2">
    <source>
    </source>
</evidence>
<evidence type="ECO:0000305" key="3"/>
<name>PA2HB_OXYSA</name>
<sequence>NLVQFGKMIE</sequence>